<name>MDM34_ARTOC</name>
<gene>
    <name evidence="1" type="primary">MDM34</name>
    <name type="ORF">MCYG_05232</name>
</gene>
<organism>
    <name type="scientific">Arthroderma otae (strain ATCC MYA-4605 / CBS 113480)</name>
    <name type="common">Microsporum canis</name>
    <dbReference type="NCBI Taxonomy" id="554155"/>
    <lineage>
        <taxon>Eukaryota</taxon>
        <taxon>Fungi</taxon>
        <taxon>Dikarya</taxon>
        <taxon>Ascomycota</taxon>
        <taxon>Pezizomycotina</taxon>
        <taxon>Eurotiomycetes</taxon>
        <taxon>Eurotiomycetidae</taxon>
        <taxon>Onygenales</taxon>
        <taxon>Arthrodermataceae</taxon>
        <taxon>Microsporum</taxon>
    </lineage>
</organism>
<protein>
    <recommendedName>
        <fullName evidence="1">Mitochondrial distribution and morphology protein 34</fullName>
    </recommendedName>
</protein>
<accession>C5FRB0</accession>
<feature type="chain" id="PRO_0000384349" description="Mitochondrial distribution and morphology protein 34">
    <location>
        <begin position="1"/>
        <end position="546"/>
    </location>
</feature>
<feature type="domain" description="SMP-LTD" evidence="1">
    <location>
        <begin position="1"/>
        <end position="195"/>
    </location>
</feature>
<feature type="region of interest" description="Disordered" evidence="2">
    <location>
        <begin position="208"/>
        <end position="230"/>
    </location>
</feature>
<feature type="region of interest" description="Disordered" evidence="2">
    <location>
        <begin position="299"/>
        <end position="319"/>
    </location>
</feature>
<feature type="region of interest" description="Disordered" evidence="2">
    <location>
        <begin position="344"/>
        <end position="382"/>
    </location>
</feature>
<feature type="region of interest" description="Disordered" evidence="2">
    <location>
        <begin position="395"/>
        <end position="416"/>
    </location>
</feature>
<feature type="region of interest" description="Disordered" evidence="2">
    <location>
        <begin position="517"/>
        <end position="546"/>
    </location>
</feature>
<feature type="compositionally biased region" description="Basic residues" evidence="2">
    <location>
        <begin position="349"/>
        <end position="362"/>
    </location>
</feature>
<feature type="compositionally biased region" description="Basic and acidic residues" evidence="2">
    <location>
        <begin position="363"/>
        <end position="374"/>
    </location>
</feature>
<sequence>MAFNFNWSPLMADAGFYTRAQELLTAALNKSPKPPIIVGDITVTELNLGSIPPELEILEIGDLADDRFRGIFKMSYSGDAYLTLKTCVQANSLNTYMVTRPKFTSPCPLAADHGLTIPLQITLSDIKLSGFVVLVFSKQKGITLVFRNDPLESLKVSSTFDSIPFVRDYLQRTIEGQLRLLFMDELPAIIHRLSLRLWVPELRGQDTEVKADEEAGPGQDPLLSPPQDPVDASGNVLSVAQIASLSLDSGVEMHSLFSQRNLVRLATLTDSQRTLSLFTPTIHDVVFRALTGAMEQSESHGGLISPASPPLSRTHSHVASLHSLQESSMSKSSLGSPLSGCGLTMGAGRHPRTRPSRKHKRRVVDLRKPQKLDDTSSTCTDSEYTVSTDASTVFSSSARVGEKPDDPITPPVSPDATIKVKDRSRVPAMQGLGPSVTNKAGQSTPSAEAEKITLSNGEPSYIPHQNTPTIEAHEKGDDNTISLNGVPPSMLSFVAVSQDRSILEQAWMMKLANEISRRIQEGKGPGSVGSNYCGRRDPSPPPAYGQ</sequence>
<dbReference type="EMBL" id="DS995705">
    <property type="protein sequence ID" value="EEQ32413.1"/>
    <property type="molecule type" value="Genomic_DNA"/>
</dbReference>
<dbReference type="RefSeq" id="XP_002845363.1">
    <property type="nucleotide sequence ID" value="XM_002845317.1"/>
</dbReference>
<dbReference type="SMR" id="C5FRB0"/>
<dbReference type="STRING" id="554155.C5FRB0"/>
<dbReference type="GeneID" id="9225895"/>
<dbReference type="VEuPathDB" id="FungiDB:MCYG_05232"/>
<dbReference type="eggNOG" id="ENOG502QT3W">
    <property type="taxonomic scope" value="Eukaryota"/>
</dbReference>
<dbReference type="HOGENOM" id="CLU_036502_1_0_1"/>
<dbReference type="OMA" id="VFRAWSG"/>
<dbReference type="OrthoDB" id="17927at2759"/>
<dbReference type="Proteomes" id="UP000002035">
    <property type="component" value="Unassembled WGS sequence"/>
</dbReference>
<dbReference type="GO" id="GO:0032865">
    <property type="term" value="C:ERMES complex"/>
    <property type="evidence" value="ECO:0007669"/>
    <property type="project" value="UniProtKB-UniRule"/>
</dbReference>
<dbReference type="GO" id="GO:0008289">
    <property type="term" value="F:lipid binding"/>
    <property type="evidence" value="ECO:0007669"/>
    <property type="project" value="UniProtKB-KW"/>
</dbReference>
<dbReference type="GO" id="GO:0000002">
    <property type="term" value="P:mitochondrial genome maintenance"/>
    <property type="evidence" value="ECO:0007669"/>
    <property type="project" value="UniProtKB-UniRule"/>
</dbReference>
<dbReference type="GO" id="GO:1990456">
    <property type="term" value="P:mitochondrion-endoplasmic reticulum membrane tethering"/>
    <property type="evidence" value="ECO:0007669"/>
    <property type="project" value="TreeGrafter"/>
</dbReference>
<dbReference type="GO" id="GO:0015914">
    <property type="term" value="P:phospholipid transport"/>
    <property type="evidence" value="ECO:0007669"/>
    <property type="project" value="TreeGrafter"/>
</dbReference>
<dbReference type="CDD" id="cd21673">
    <property type="entry name" value="SMP_Mdm34"/>
    <property type="match status" value="1"/>
</dbReference>
<dbReference type="HAMAP" id="MF_03105">
    <property type="entry name" value="Mdm34"/>
    <property type="match status" value="1"/>
</dbReference>
<dbReference type="InterPro" id="IPR027536">
    <property type="entry name" value="Mdm34"/>
</dbReference>
<dbReference type="InterPro" id="IPR031468">
    <property type="entry name" value="SMP_LBD"/>
</dbReference>
<dbReference type="PANTHER" id="PTHR28185">
    <property type="entry name" value="MITOCHONDRIAL DISTRIBUTION AND MORPHOLOGY PROTEIN 34"/>
    <property type="match status" value="1"/>
</dbReference>
<dbReference type="PANTHER" id="PTHR28185:SF1">
    <property type="entry name" value="MITOCHONDRIAL DISTRIBUTION AND MORPHOLOGY PROTEIN 34"/>
    <property type="match status" value="1"/>
</dbReference>
<dbReference type="PROSITE" id="PS51847">
    <property type="entry name" value="SMP"/>
    <property type="match status" value="1"/>
</dbReference>
<proteinExistence type="inferred from homology"/>
<reference key="1">
    <citation type="journal article" date="2012" name="MBio">
        <title>Comparative genome analysis of Trichophyton rubrum and related dermatophytes reveals candidate genes involved in infection.</title>
        <authorList>
            <person name="Martinez D.A."/>
            <person name="Oliver B.G."/>
            <person name="Graeser Y."/>
            <person name="Goldberg J.M."/>
            <person name="Li W."/>
            <person name="Martinez-Rossi N.M."/>
            <person name="Monod M."/>
            <person name="Shelest E."/>
            <person name="Barton R.C."/>
            <person name="Birch E."/>
            <person name="Brakhage A.A."/>
            <person name="Chen Z."/>
            <person name="Gurr S.J."/>
            <person name="Heiman D."/>
            <person name="Heitman J."/>
            <person name="Kosti I."/>
            <person name="Rossi A."/>
            <person name="Saif S."/>
            <person name="Samalova M."/>
            <person name="Saunders C.W."/>
            <person name="Shea T."/>
            <person name="Summerbell R.C."/>
            <person name="Xu J."/>
            <person name="Young S."/>
            <person name="Zeng Q."/>
            <person name="Birren B.W."/>
            <person name="Cuomo C.A."/>
            <person name="White T.C."/>
        </authorList>
    </citation>
    <scope>NUCLEOTIDE SEQUENCE [LARGE SCALE GENOMIC DNA]</scope>
    <source>
        <strain>ATCC MYA-4605 / CBS 113480</strain>
    </source>
</reference>
<keyword id="KW-0445">Lipid transport</keyword>
<keyword id="KW-0446">Lipid-binding</keyword>
<keyword id="KW-0472">Membrane</keyword>
<keyword id="KW-0496">Mitochondrion</keyword>
<keyword id="KW-1000">Mitochondrion outer membrane</keyword>
<keyword id="KW-1185">Reference proteome</keyword>
<keyword id="KW-0812">Transmembrane</keyword>
<keyword id="KW-1134">Transmembrane beta strand</keyword>
<keyword id="KW-0813">Transport</keyword>
<comment type="function">
    <text evidence="1">Component of the ERMES/MDM complex, which serves as a molecular tether to connect the endoplasmic reticulum (ER) and mitochondria. Components of this complex are involved in the control of mitochondrial shape and protein biogenesis, and function in nonvesicular lipid trafficking between the ER and mitochondria. MDM34 is required for the interaction of the ER-resident membrane protein MMM1 and the outer mitochondrial membrane-resident beta-barrel protein MDM10.</text>
</comment>
<comment type="subunit">
    <text evidence="1">Component of the ER-mitochondria encounter structure (ERMES) or MDM complex, composed of MMM1, MDM10, MDM12 and MDM34.</text>
</comment>
<comment type="subcellular location">
    <subcellularLocation>
        <location evidence="1">Mitochondrion outer membrane</location>
        <topology evidence="1">Multi-pass membrane protein</topology>
    </subcellularLocation>
    <text evidence="1">The ERMES/MDM complex localizes to a few discrete foci (around 10 per single cell), that represent mitochondria-endoplasmic reticulum junctions. These foci are often found next to mtDNA nucleoids.</text>
</comment>
<comment type="domain">
    <text evidence="1">Lacks alpha-helical transmembrane segments, suggesting that it resides in the membrane via beta-sheet conformations similar to those predicted for other outer membrane proteins and porin.</text>
</comment>
<comment type="domain">
    <text evidence="1">The SMP-LTD domain is a barrel-like domain that can bind various types of glycerophospholipids in its interior and mediate their transfer between two adjacent bilayers.</text>
</comment>
<comment type="similarity">
    <text evidence="1">Belongs to the MDM34 family.</text>
</comment>
<evidence type="ECO:0000255" key="1">
    <source>
        <dbReference type="HAMAP-Rule" id="MF_03105"/>
    </source>
</evidence>
<evidence type="ECO:0000256" key="2">
    <source>
        <dbReference type="SAM" id="MobiDB-lite"/>
    </source>
</evidence>